<dbReference type="EC" id="3.4.21.97" evidence="3"/>
<dbReference type="EMBL" id="V01555">
    <property type="protein sequence ID" value="CAA24801.1"/>
    <property type="molecule type" value="Genomic_DNA"/>
</dbReference>
<dbReference type="EMBL" id="V01555">
    <property type="protein sequence ID" value="CAA24802.1"/>
    <property type="molecule type" value="Genomic_DNA"/>
</dbReference>
<dbReference type="EMBL" id="AJ507799">
    <property type="protein sequence ID" value="CAD53454.1"/>
    <property type="molecule type" value="Genomic_DNA"/>
</dbReference>
<dbReference type="EMBL" id="AJ507799">
    <property type="protein sequence ID" value="CAD53455.1"/>
    <property type="molecule type" value="Genomic_DNA"/>
</dbReference>
<dbReference type="PIR" id="A03798">
    <property type="entry name" value="QQBE3R"/>
</dbReference>
<dbReference type="PDB" id="1O6E">
    <property type="method" value="X-ray"/>
    <property type="resolution" value="2.30 A"/>
    <property type="chains" value="A/B=1-235"/>
</dbReference>
<dbReference type="PDBsum" id="1O6E"/>
<dbReference type="SMR" id="P03234"/>
<dbReference type="BindingDB" id="P03234"/>
<dbReference type="ChEMBL" id="CHEMBL4013"/>
<dbReference type="DrugBank" id="DB03976">
    <property type="generic name" value="Phosphorylisopropane"/>
</dbReference>
<dbReference type="MEROPS" id="S21.003"/>
<dbReference type="DNASU" id="3783696"/>
<dbReference type="DNASU" id="3783733"/>
<dbReference type="KEGG" id="vg:3783696"/>
<dbReference type="KEGG" id="vg:3783733"/>
<dbReference type="EvolutionaryTrace" id="P03234"/>
<dbReference type="Proteomes" id="UP000153037">
    <property type="component" value="Segment"/>
</dbReference>
<dbReference type="GO" id="GO:0030430">
    <property type="term" value="C:host cell cytoplasm"/>
    <property type="evidence" value="ECO:0007669"/>
    <property type="project" value="UniProtKB-SubCell"/>
</dbReference>
<dbReference type="GO" id="GO:0042025">
    <property type="term" value="C:host cell nucleus"/>
    <property type="evidence" value="ECO:0007669"/>
    <property type="project" value="UniProtKB-SubCell"/>
</dbReference>
<dbReference type="GO" id="GO:0042802">
    <property type="term" value="F:identical protein binding"/>
    <property type="evidence" value="ECO:0007669"/>
    <property type="project" value="UniProtKB-UniRule"/>
</dbReference>
<dbReference type="GO" id="GO:0004252">
    <property type="term" value="F:serine-type endopeptidase activity"/>
    <property type="evidence" value="ECO:0007669"/>
    <property type="project" value="UniProtKB-UniRule"/>
</dbReference>
<dbReference type="GO" id="GO:0039708">
    <property type="term" value="P:nuclear capsid assembly"/>
    <property type="evidence" value="ECO:0007669"/>
    <property type="project" value="UniProtKB-ARBA"/>
</dbReference>
<dbReference type="GO" id="GO:0006508">
    <property type="term" value="P:proteolysis"/>
    <property type="evidence" value="ECO:0007669"/>
    <property type="project" value="UniProtKB-KW"/>
</dbReference>
<dbReference type="GO" id="GO:0019076">
    <property type="term" value="P:viral release from host cell"/>
    <property type="evidence" value="ECO:0007669"/>
    <property type="project" value="UniProtKB-UniRule"/>
</dbReference>
<dbReference type="Gene3D" id="3.20.16.10">
    <property type="entry name" value="Herpesvirus/Caudovirus protease domain"/>
    <property type="match status" value="1"/>
</dbReference>
<dbReference type="HAMAP" id="MF_04008">
    <property type="entry name" value="HSV_SCAF"/>
    <property type="match status" value="1"/>
</dbReference>
<dbReference type="InterPro" id="IPR035443">
    <property type="entry name" value="Herpes_virus_sf"/>
</dbReference>
<dbReference type="InterPro" id="IPR001847">
    <property type="entry name" value="Peptidase_S21"/>
</dbReference>
<dbReference type="Pfam" id="PF00716">
    <property type="entry name" value="Peptidase_S21"/>
    <property type="match status" value="1"/>
</dbReference>
<dbReference type="PRINTS" id="PR00236">
    <property type="entry name" value="HSVCAPSIDP40"/>
</dbReference>
<dbReference type="SUPFAM" id="SSF50789">
    <property type="entry name" value="Herpes virus serine proteinase, assemblin"/>
    <property type="match status" value="1"/>
</dbReference>
<organismHost>
    <name type="scientific">Homo sapiens</name>
    <name type="common">Human</name>
    <dbReference type="NCBI Taxonomy" id="9606"/>
</organismHost>
<gene>
    <name evidence="7" type="ORF">BVRF2/BdRF1</name>
</gene>
<reference key="1">
    <citation type="journal article" date="1983" name="Mol. Biol. Med.">
        <title>Sequence analysis of the 17,166 base-pair EcoRI fragment C of B95-8 Epstein-Barr virus.</title>
        <authorList>
            <person name="Bankier A.T."/>
            <person name="Deininger P.L."/>
            <person name="Farrell P.J."/>
            <person name="Barrell B.G."/>
        </authorList>
    </citation>
    <scope>NUCLEOTIDE SEQUENCE [GENOMIC DNA]</scope>
</reference>
<reference key="2">
    <citation type="journal article" date="1984" name="Nature">
        <title>DNA sequence and expression of the B95-8 Epstein-Barr virus genome.</title>
        <authorList>
            <person name="Baer R."/>
            <person name="Bankier A.T."/>
            <person name="Biggin M.D."/>
            <person name="Deininger P.L."/>
            <person name="Farrell P.J."/>
            <person name="Gibson T.J."/>
            <person name="Hatfull G."/>
            <person name="Hudson G.S."/>
            <person name="Satchwell S.C."/>
            <person name="Seguin C."/>
            <person name="Tuffnell P.S."/>
            <person name="Barrell B.G."/>
        </authorList>
    </citation>
    <scope>NUCLEOTIDE SEQUENCE [LARGE SCALE GENOMIC DNA]</scope>
</reference>
<reference key="3">
    <citation type="journal article" date="2003" name="Virology">
        <title>Updated Epstein-Barr virus (EBV) DNA sequence and analysis of a promoter for the BART (CST, BARF0) RNAs of EBV.</title>
        <authorList>
            <person name="de Jesus O."/>
            <person name="Smith P.R."/>
            <person name="Spender L.C."/>
            <person name="Elgueta Karstegl C."/>
            <person name="Niller H.H."/>
            <person name="Huang D."/>
            <person name="Farrell P.J."/>
        </authorList>
    </citation>
    <scope>GENOME REANNOTATION</scope>
</reference>
<reference key="4">
    <citation type="journal article" date="2009" name="J. Virol.">
        <title>Self-assembly of Epstein-Barr virus capsids.</title>
        <authorList>
            <person name="Henson B.W."/>
            <person name="Perkins E.M."/>
            <person name="Cothran J.E."/>
            <person name="Desai P."/>
        </authorList>
    </citation>
    <scope>FUNCTION</scope>
</reference>
<reference key="5">
    <citation type="journal article" date="2019" name="Virology">
        <title>Identification of the Epstein Barr Virus portal.</title>
        <authorList>
            <person name="Visalli R.J."/>
            <person name="Schwartz A.M."/>
            <person name="Patel S."/>
            <person name="Visalli M.A."/>
        </authorList>
    </citation>
    <scope>SUBCELLULAR LOCATION</scope>
</reference>
<reference key="6">
    <citation type="journal article" date="2002" name="J. Mol. Biol.">
        <title>The crystal structure of the Epstein-Barr virus protease shows rearrangement of the processed C terminus.</title>
        <authorList>
            <person name="Buisson M."/>
            <person name="Hernandez J.F."/>
            <person name="Lascoux D."/>
            <person name="Schoehn G."/>
            <person name="Forest E."/>
            <person name="Arlaud G."/>
            <person name="Seigneurin J.M."/>
            <person name="Ruigrok R.W."/>
            <person name="Burmeister W.P."/>
        </authorList>
    </citation>
    <scope>X-RAY CRYSTALLOGRAPHY (2.3 ANGSTROMS) OF 1-235</scope>
</reference>
<protein>
    <recommendedName>
        <fullName evidence="3">Capsid scaffolding protein</fullName>
    </recommendedName>
    <alternativeName>
        <fullName>Capsid protein P40</fullName>
    </alternativeName>
    <alternativeName>
        <fullName evidence="3">Protease precursor</fullName>
        <shortName evidence="3">pPR</shortName>
    </alternativeName>
    <alternativeName>
        <fullName>Protein EC-RF3/EC-RF3A</fullName>
    </alternativeName>
    <alternativeName>
        <fullName>Virion structural protein BVRF2</fullName>
    </alternativeName>
    <component>
        <recommendedName>
            <fullName evidence="3">Assemblin</fullName>
            <ecNumber evidence="3">3.4.21.97</ecNumber>
        </recommendedName>
        <alternativeName>
            <fullName evidence="3">Protease</fullName>
            <shortName evidence="3">Pr</shortName>
        </alternativeName>
    </component>
    <component>
        <recommendedName>
            <fullName evidence="3">Assembly protein</fullName>
            <shortName evidence="3">AP</shortName>
        </recommendedName>
        <alternativeName>
            <fullName evidence="3">Capsid assembly protein</fullName>
        </alternativeName>
    </component>
</protein>
<accession>P03234</accession>
<accession>Q66541</accession>
<accession>Q777B6</accession>
<name>SCAF_EBVB9</name>
<organism>
    <name type="scientific">Epstein-Barr virus (strain B95-8)</name>
    <name type="common">HHV-4</name>
    <name type="synonym">Human herpesvirus 4</name>
    <dbReference type="NCBI Taxonomy" id="10377"/>
    <lineage>
        <taxon>Viruses</taxon>
        <taxon>Duplodnaviria</taxon>
        <taxon>Heunggongvirae</taxon>
        <taxon>Peploviricota</taxon>
        <taxon>Herviviricetes</taxon>
        <taxon>Herpesvirales</taxon>
        <taxon>Orthoherpesviridae</taxon>
        <taxon>Gammaherpesvirinae</taxon>
        <taxon>Lymphocryptovirus</taxon>
        <taxon>Lymphocryptovirus humangamma4</taxon>
        <taxon>Epstein-Barr virus (strain GD1)</taxon>
    </lineage>
</organism>
<feature type="chain" id="PRO_0000027279" description="Capsid scaffolding protein">
    <location>
        <begin position="1"/>
        <end position="605"/>
    </location>
</feature>
<feature type="chain" id="PRO_0000027280" description="Assemblin" evidence="3">
    <location>
        <begin position="1"/>
        <end position="235"/>
    </location>
</feature>
<feature type="chain" id="PRO_0000027281" description="Assembly protein" evidence="3">
    <location>
        <begin position="236"/>
        <end position="605"/>
    </location>
</feature>
<feature type="region of interest" description="Disordered" evidence="4">
    <location>
        <begin position="235"/>
        <end position="274"/>
    </location>
</feature>
<feature type="region of interest" description="Interaction with pAP" evidence="3">
    <location>
        <begin position="281"/>
        <end position="300"/>
    </location>
</feature>
<feature type="region of interest" description="Disordered" evidence="4">
    <location>
        <begin position="403"/>
        <end position="432"/>
    </location>
</feature>
<feature type="region of interest" description="Disordered" evidence="4">
    <location>
        <begin position="489"/>
        <end position="588"/>
    </location>
</feature>
<feature type="region of interest" description="Interaction with major capsid protein" evidence="3">
    <location>
        <begin position="585"/>
        <end position="605"/>
    </location>
</feature>
<feature type="short sequence motif" description="Nuclear localization signal" evidence="1">
    <location>
        <begin position="410"/>
        <end position="416"/>
    </location>
</feature>
<feature type="compositionally biased region" description="Polar residues" evidence="4">
    <location>
        <begin position="568"/>
        <end position="579"/>
    </location>
</feature>
<feature type="active site" description="Charge relay system" evidence="3">
    <location>
        <position position="48"/>
    </location>
</feature>
<feature type="active site" description="Charge relay system" evidence="3">
    <location>
        <position position="116"/>
    </location>
</feature>
<feature type="active site" description="Charge relay system" evidence="3">
    <location>
        <position position="139"/>
    </location>
</feature>
<feature type="site" description="Cleavage; by assemblin; Release site" evidence="3">
    <location>
        <begin position="235"/>
        <end position="236"/>
    </location>
</feature>
<feature type="site" description="Cleavage; by assemblin; Maturation site" evidence="2">
    <location>
        <begin position="568"/>
        <end position="569"/>
    </location>
</feature>
<feature type="splice variant" id="VSP_018865" description="In isoform pAP." evidence="8">
    <location>
        <begin position="1"/>
        <end position="260"/>
    </location>
</feature>
<feature type="strand" evidence="9">
    <location>
        <begin position="7"/>
        <end position="14"/>
    </location>
</feature>
<feature type="strand" evidence="9">
    <location>
        <begin position="21"/>
        <end position="23"/>
    </location>
</feature>
<feature type="helix" evidence="9">
    <location>
        <begin position="29"/>
        <end position="35"/>
    </location>
</feature>
<feature type="strand" evidence="9">
    <location>
        <begin position="42"/>
        <end position="46"/>
    </location>
</feature>
<feature type="strand" evidence="9">
    <location>
        <begin position="49"/>
        <end position="62"/>
    </location>
</feature>
<feature type="strand" evidence="9">
    <location>
        <begin position="67"/>
        <end position="73"/>
    </location>
</feature>
<feature type="helix" evidence="9">
    <location>
        <begin position="76"/>
        <end position="79"/>
    </location>
</feature>
<feature type="helix" evidence="9">
    <location>
        <begin position="81"/>
        <end position="86"/>
    </location>
</feature>
<feature type="helix" evidence="9">
    <location>
        <begin position="90"/>
        <end position="93"/>
    </location>
</feature>
<feature type="helix" evidence="9">
    <location>
        <begin position="103"/>
        <end position="111"/>
    </location>
</feature>
<feature type="strand" evidence="9">
    <location>
        <begin position="114"/>
        <end position="120"/>
    </location>
</feature>
<feature type="strand" evidence="9">
    <location>
        <begin position="136"/>
        <end position="145"/>
    </location>
</feature>
<feature type="strand" evidence="9">
    <location>
        <begin position="147"/>
        <end position="150"/>
    </location>
</feature>
<feature type="strand" evidence="9">
    <location>
        <begin position="154"/>
        <end position="157"/>
    </location>
</feature>
<feature type="helix" evidence="9">
    <location>
        <begin position="159"/>
        <end position="164"/>
    </location>
</feature>
<feature type="helix" evidence="9">
    <location>
        <begin position="171"/>
        <end position="184"/>
    </location>
</feature>
<feature type="helix" evidence="9">
    <location>
        <begin position="198"/>
        <end position="207"/>
    </location>
</feature>
<feature type="helix" evidence="9">
    <location>
        <begin position="214"/>
        <end position="224"/>
    </location>
</feature>
<feature type="strand" evidence="9">
    <location>
        <begin position="229"/>
        <end position="232"/>
    </location>
</feature>
<evidence type="ECO:0000250" key="1"/>
<evidence type="ECO:0000250" key="2">
    <source>
        <dbReference type="UniProtKB" id="P16753"/>
    </source>
</evidence>
<evidence type="ECO:0000255" key="3">
    <source>
        <dbReference type="HAMAP-Rule" id="MF_04008"/>
    </source>
</evidence>
<evidence type="ECO:0000256" key="4">
    <source>
        <dbReference type="SAM" id="MobiDB-lite"/>
    </source>
</evidence>
<evidence type="ECO:0000269" key="5">
    <source>
    </source>
</evidence>
<evidence type="ECO:0000269" key="6">
    <source>
    </source>
</evidence>
<evidence type="ECO:0000303" key="7">
    <source>
    </source>
</evidence>
<evidence type="ECO:0000305" key="8"/>
<evidence type="ECO:0007829" key="9">
    <source>
        <dbReference type="PDB" id="1O6E"/>
    </source>
</evidence>
<keyword id="KW-0002">3D-structure</keyword>
<keyword id="KW-0877">Alternative promoter usage</keyword>
<keyword id="KW-1035">Host cytoplasm</keyword>
<keyword id="KW-1048">Host nucleus</keyword>
<keyword id="KW-0378">Hydrolase</keyword>
<keyword id="KW-0597">Phosphoprotein</keyword>
<keyword id="KW-0645">Protease</keyword>
<keyword id="KW-1185">Reference proteome</keyword>
<keyword id="KW-0720">Serine protease</keyword>
<keyword id="KW-0118">Viral capsid assembly</keyword>
<keyword id="KW-1188">Viral release from host cell</keyword>
<proteinExistence type="evidence at protein level"/>
<comment type="function">
    <molecule>Capsid scaffolding protein</molecule>
    <text evidence="3 5">Acts as a scaffold protein by binding major capsid protein in the cytoplasm, inducing the nuclear localization of both proteins. Multimerizes in the nucleus such as major capsid protein forms the icosahedral T=16 capsid. Autocatalytic cleavage releases the assembly protein, and subsequently abolishes interaction with major capsid protein. Cleavages products are evicted from the capsid before or during DNA packaging.</text>
</comment>
<comment type="function">
    <molecule>Assemblin</molecule>
    <text evidence="3 5">Protease that plays an essential role in virion assembly within the nucleus. Catalyzes the cleavage of the assembly protein after formation of the spherical procapsid. By that cleavage, the capsid matures and gains its icosahedral shape. The cleavage sites seem to include -Ala-Ser-, -Ala-Ala-, as well as Ala-Thr bonds. Assemblin and cleavages products are evicted from the capsid before or during DNA packaging.</text>
</comment>
<comment type="function">
    <molecule>Assembly protein</molecule>
    <text evidence="3 5">Plays a major role in capsid assembly. Acts as a scaffold protein by binding major capsid protein. Multimerizes in the nucleus such as major capsid protein forms the icosahedral T=16 capsid. Cleaved by assemblin after capsid completion. The cleavages products are evicted from the capsid before or during DNA packaging.</text>
</comment>
<comment type="catalytic activity">
    <molecule>Assemblin</molecule>
    <reaction evidence="3">
        <text>Cleaves -Ala-|-Ser- and -Ala-|-Ala- bonds in the scaffold protein.</text>
        <dbReference type="EC" id="3.4.21.97"/>
    </reaction>
</comment>
<comment type="subunit">
    <molecule>Capsid scaffolding protein</molecule>
    <text evidence="3">Homomultimer. Interacts with major capsid protein.</text>
</comment>
<comment type="subunit">
    <molecule>Assemblin</molecule>
    <text evidence="3">Exists in a monomer-dimer equilibrium with the dimer being the active species.</text>
</comment>
<comment type="subunit">
    <molecule>Assembly protein</molecule>
    <text evidence="3">Homomultimer. Interacts with major capsid protein.</text>
</comment>
<comment type="subcellular location">
    <molecule>Capsid scaffolding protein</molecule>
    <subcellularLocation>
        <location evidence="3">Host cytoplasm</location>
    </subcellularLocation>
</comment>
<comment type="subcellular location">
    <molecule>Assemblin</molecule>
    <subcellularLocation>
        <location evidence="3">Host nucleus</location>
    </subcellularLocation>
</comment>
<comment type="subcellular location">
    <molecule>Assembly protein</molecule>
    <subcellularLocation>
        <location evidence="3">Host nucleus</location>
    </subcellularLocation>
</comment>
<comment type="subcellular location">
    <molecule>Isoform pAP</molecule>
    <subcellularLocation>
        <location evidence="6">Host nucleus</location>
    </subcellularLocation>
</comment>
<comment type="alternative products">
    <event type="alternative promoter"/>
    <isoform>
        <id>P03234-1</id>
        <name>Capsid scaffolding protein</name>
        <name>pPR</name>
        <name>EC-RF3</name>
        <sequence type="displayed"/>
    </isoform>
    <isoform>
        <id>P03234-2</id>
        <name>pAP</name>
        <name>Assembly protein</name>
        <name>EC-RF3A</name>
        <sequence type="described" ref="VSP_018865"/>
    </isoform>
</comment>
<comment type="domain">
    <text evidence="3">Region of interaction between pPR and pAP is called Amino conserved domain (ACD). The region of interaction with major capsid protein is called carboxyl conserved domain (CCD).</text>
</comment>
<comment type="PTM">
    <molecule>Capsid scaffolding protein</molecule>
    <text evidence="3">Capsid scaffolding protein is cleaved by assemblin after formation of the spherical procapsid. As a result, the capsid obtains its mature, icosahedral shape. Cleavages occur at two or more sites: release (R-site) and maturation (M-site).</text>
</comment>
<comment type="similarity">
    <text evidence="3">Belongs to the herpesviridae capsid scaffolding protein family.</text>
</comment>
<comment type="caution">
    <text evidence="8">Be careful of the possible confusion between BDRF1 with BdRF1.</text>
</comment>
<sequence length="605" mass="64102">MVQAPSVYVCGFVERPDAPPKDACLHLDPLTVKSQLPLKKPLPLTVEHLPDAPVGSVFGLYQSRAGLFSAASITSGDFLSLLDSIYHDCDIAQSQRLPLPREPKVEALHAWLPSLSLASLHPDIPQTTADGGKLSFFDHVSICALGRRRGTTAVYGTDLAWVLKHFSDLEPSIAAQIENDANAAKRESGCPEDHPLPLTKLIAKAIDAGFLRNRVETLRQDRGVANIPAESYLKASDAPDLQKPDKALQSPPPASTDPATMLSGNAGEGATACGGSAAAGQDLISVPRNTFMTLLQTNLDNKPPRQTPLPYAAPLPPFSHQAIATAPSYGPGAGAVAPAGGYFTSPGGYYAGPAGGDPGAFLAMDAHTYHPHPHPPPAYFGLPGLFGPPPPVPPYYGSHLRADYVPAPSRSNKRKRDPEEDEEGGGLFPGEDATLYRKDIAGLSKSVNELQHTLQALRRETLSYGHTGVGYCPQQGPCYTHSGPYGFQPHQSYEVPRYVPHPPPPPTSHQAAQAQPPPPGTQAPEAHCVAESTIPEAGAAGNSGPREDTNPQQPTTEGHHRGKKLVQASASGVAQSKEPTTPKAKSVSAHLKSIFCEELLNKRVA</sequence>